<organism>
    <name type="scientific">Streptococcus thermophilus (strain ATCC BAA-491 / LMD-9)</name>
    <dbReference type="NCBI Taxonomy" id="322159"/>
    <lineage>
        <taxon>Bacteria</taxon>
        <taxon>Bacillati</taxon>
        <taxon>Bacillota</taxon>
        <taxon>Bacilli</taxon>
        <taxon>Lactobacillales</taxon>
        <taxon>Streptococcaceae</taxon>
        <taxon>Streptococcus</taxon>
    </lineage>
</organism>
<proteinExistence type="inferred from homology"/>
<gene>
    <name evidence="1" type="primary">rplO</name>
    <name type="ordered locus">STER_1888</name>
</gene>
<name>RL15_STRTD</name>
<dbReference type="EMBL" id="CP000419">
    <property type="protein sequence ID" value="ABJ67002.1"/>
    <property type="molecule type" value="Genomic_DNA"/>
</dbReference>
<dbReference type="RefSeq" id="WP_002946175.1">
    <property type="nucleotide sequence ID" value="NC_008532.1"/>
</dbReference>
<dbReference type="SMR" id="Q03IH0"/>
<dbReference type="KEGG" id="ste:STER_1888"/>
<dbReference type="HOGENOM" id="CLU_055188_4_2_9"/>
<dbReference type="GO" id="GO:0022625">
    <property type="term" value="C:cytosolic large ribosomal subunit"/>
    <property type="evidence" value="ECO:0007669"/>
    <property type="project" value="TreeGrafter"/>
</dbReference>
<dbReference type="GO" id="GO:0019843">
    <property type="term" value="F:rRNA binding"/>
    <property type="evidence" value="ECO:0007669"/>
    <property type="project" value="UniProtKB-UniRule"/>
</dbReference>
<dbReference type="GO" id="GO:0003735">
    <property type="term" value="F:structural constituent of ribosome"/>
    <property type="evidence" value="ECO:0007669"/>
    <property type="project" value="InterPro"/>
</dbReference>
<dbReference type="GO" id="GO:0006412">
    <property type="term" value="P:translation"/>
    <property type="evidence" value="ECO:0007669"/>
    <property type="project" value="UniProtKB-UniRule"/>
</dbReference>
<dbReference type="Gene3D" id="3.100.10.10">
    <property type="match status" value="1"/>
</dbReference>
<dbReference type="HAMAP" id="MF_01341">
    <property type="entry name" value="Ribosomal_uL15"/>
    <property type="match status" value="1"/>
</dbReference>
<dbReference type="InterPro" id="IPR030878">
    <property type="entry name" value="Ribosomal_uL15"/>
</dbReference>
<dbReference type="InterPro" id="IPR021131">
    <property type="entry name" value="Ribosomal_uL15/eL18"/>
</dbReference>
<dbReference type="InterPro" id="IPR036227">
    <property type="entry name" value="Ribosomal_uL15/eL18_sf"/>
</dbReference>
<dbReference type="InterPro" id="IPR005749">
    <property type="entry name" value="Ribosomal_uL15_bac-type"/>
</dbReference>
<dbReference type="InterPro" id="IPR001196">
    <property type="entry name" value="Ribosomal_uL15_CS"/>
</dbReference>
<dbReference type="NCBIfam" id="TIGR01071">
    <property type="entry name" value="rplO_bact"/>
    <property type="match status" value="1"/>
</dbReference>
<dbReference type="PANTHER" id="PTHR12934">
    <property type="entry name" value="50S RIBOSOMAL PROTEIN L15"/>
    <property type="match status" value="1"/>
</dbReference>
<dbReference type="PANTHER" id="PTHR12934:SF11">
    <property type="entry name" value="LARGE RIBOSOMAL SUBUNIT PROTEIN UL15M"/>
    <property type="match status" value="1"/>
</dbReference>
<dbReference type="Pfam" id="PF00828">
    <property type="entry name" value="Ribosomal_L27A"/>
    <property type="match status" value="1"/>
</dbReference>
<dbReference type="SUPFAM" id="SSF52080">
    <property type="entry name" value="Ribosomal proteins L15p and L18e"/>
    <property type="match status" value="1"/>
</dbReference>
<dbReference type="PROSITE" id="PS00475">
    <property type="entry name" value="RIBOSOMAL_L15"/>
    <property type="match status" value="1"/>
</dbReference>
<reference key="1">
    <citation type="journal article" date="2006" name="Proc. Natl. Acad. Sci. U.S.A.">
        <title>Comparative genomics of the lactic acid bacteria.</title>
        <authorList>
            <person name="Makarova K.S."/>
            <person name="Slesarev A."/>
            <person name="Wolf Y.I."/>
            <person name="Sorokin A."/>
            <person name="Mirkin B."/>
            <person name="Koonin E.V."/>
            <person name="Pavlov A."/>
            <person name="Pavlova N."/>
            <person name="Karamychev V."/>
            <person name="Polouchine N."/>
            <person name="Shakhova V."/>
            <person name="Grigoriev I."/>
            <person name="Lou Y."/>
            <person name="Rohksar D."/>
            <person name="Lucas S."/>
            <person name="Huang K."/>
            <person name="Goodstein D.M."/>
            <person name="Hawkins T."/>
            <person name="Plengvidhya V."/>
            <person name="Welker D."/>
            <person name="Hughes J."/>
            <person name="Goh Y."/>
            <person name="Benson A."/>
            <person name="Baldwin K."/>
            <person name="Lee J.-H."/>
            <person name="Diaz-Muniz I."/>
            <person name="Dosti B."/>
            <person name="Smeianov V."/>
            <person name="Wechter W."/>
            <person name="Barabote R."/>
            <person name="Lorca G."/>
            <person name="Altermann E."/>
            <person name="Barrangou R."/>
            <person name="Ganesan B."/>
            <person name="Xie Y."/>
            <person name="Rawsthorne H."/>
            <person name="Tamir D."/>
            <person name="Parker C."/>
            <person name="Breidt F."/>
            <person name="Broadbent J.R."/>
            <person name="Hutkins R."/>
            <person name="O'Sullivan D."/>
            <person name="Steele J."/>
            <person name="Unlu G."/>
            <person name="Saier M.H. Jr."/>
            <person name="Klaenhammer T."/>
            <person name="Richardson P."/>
            <person name="Kozyavkin S."/>
            <person name="Weimer B.C."/>
            <person name="Mills D.A."/>
        </authorList>
    </citation>
    <scope>NUCLEOTIDE SEQUENCE [LARGE SCALE GENOMIC DNA]</scope>
    <source>
        <strain>ATCC BAA-491 / LMD-9</strain>
    </source>
</reference>
<comment type="function">
    <text evidence="1">Binds to the 23S rRNA.</text>
</comment>
<comment type="subunit">
    <text evidence="1">Part of the 50S ribosomal subunit.</text>
</comment>
<comment type="similarity">
    <text evidence="1">Belongs to the universal ribosomal protein uL15 family.</text>
</comment>
<protein>
    <recommendedName>
        <fullName evidence="1">Large ribosomal subunit protein uL15</fullName>
    </recommendedName>
    <alternativeName>
        <fullName evidence="3">50S ribosomal protein L15</fullName>
    </alternativeName>
</protein>
<feature type="chain" id="PRO_1000054554" description="Large ribosomal subunit protein uL15">
    <location>
        <begin position="1"/>
        <end position="146"/>
    </location>
</feature>
<feature type="region of interest" description="Disordered" evidence="2">
    <location>
        <begin position="1"/>
        <end position="57"/>
    </location>
</feature>
<feature type="compositionally biased region" description="Basic and acidic residues" evidence="2">
    <location>
        <begin position="1"/>
        <end position="13"/>
    </location>
</feature>
<feature type="compositionally biased region" description="Gly residues" evidence="2">
    <location>
        <begin position="23"/>
        <end position="35"/>
    </location>
</feature>
<keyword id="KW-0687">Ribonucleoprotein</keyword>
<keyword id="KW-0689">Ribosomal protein</keyword>
<keyword id="KW-0694">RNA-binding</keyword>
<keyword id="KW-0699">rRNA-binding</keyword>
<accession>Q03IH0</accession>
<sequence>MKLHELKPAEGSRKVRNRVGRGTSSGNGKTSGRGQKGQKARSGVGLRPGFEGGQTPLFRRLPKRGFTNINAKEYTLVNLDQLNVFEDGTEVTPVVLKEAGIIRAEKSGVKVLGNGELTKKLTVKAAKFSKSAEAAITAKGGSIEVI</sequence>
<evidence type="ECO:0000255" key="1">
    <source>
        <dbReference type="HAMAP-Rule" id="MF_01341"/>
    </source>
</evidence>
<evidence type="ECO:0000256" key="2">
    <source>
        <dbReference type="SAM" id="MobiDB-lite"/>
    </source>
</evidence>
<evidence type="ECO:0000305" key="3"/>